<proteinExistence type="inferred from homology"/>
<dbReference type="EC" id="6.1.1.10" evidence="1"/>
<dbReference type="EMBL" id="CP000510">
    <property type="protein sequence ID" value="ABM03420.1"/>
    <property type="molecule type" value="Genomic_DNA"/>
</dbReference>
<dbReference type="RefSeq" id="WP_011769980.1">
    <property type="nucleotide sequence ID" value="NC_008709.1"/>
</dbReference>
<dbReference type="SMR" id="A1SVA5"/>
<dbReference type="STRING" id="357804.Ping_1623"/>
<dbReference type="KEGG" id="pin:Ping_1623"/>
<dbReference type="eggNOG" id="COG0073">
    <property type="taxonomic scope" value="Bacteria"/>
</dbReference>
<dbReference type="eggNOG" id="COG0143">
    <property type="taxonomic scope" value="Bacteria"/>
</dbReference>
<dbReference type="HOGENOM" id="CLU_009710_7_0_6"/>
<dbReference type="OrthoDB" id="9810191at2"/>
<dbReference type="Proteomes" id="UP000000639">
    <property type="component" value="Chromosome"/>
</dbReference>
<dbReference type="GO" id="GO:0005829">
    <property type="term" value="C:cytosol"/>
    <property type="evidence" value="ECO:0007669"/>
    <property type="project" value="TreeGrafter"/>
</dbReference>
<dbReference type="GO" id="GO:0005524">
    <property type="term" value="F:ATP binding"/>
    <property type="evidence" value="ECO:0007669"/>
    <property type="project" value="UniProtKB-UniRule"/>
</dbReference>
<dbReference type="GO" id="GO:0046872">
    <property type="term" value="F:metal ion binding"/>
    <property type="evidence" value="ECO:0007669"/>
    <property type="project" value="UniProtKB-KW"/>
</dbReference>
<dbReference type="GO" id="GO:0004825">
    <property type="term" value="F:methionine-tRNA ligase activity"/>
    <property type="evidence" value="ECO:0007669"/>
    <property type="project" value="UniProtKB-UniRule"/>
</dbReference>
<dbReference type="GO" id="GO:0000049">
    <property type="term" value="F:tRNA binding"/>
    <property type="evidence" value="ECO:0007669"/>
    <property type="project" value="UniProtKB-KW"/>
</dbReference>
<dbReference type="GO" id="GO:0006431">
    <property type="term" value="P:methionyl-tRNA aminoacylation"/>
    <property type="evidence" value="ECO:0007669"/>
    <property type="project" value="UniProtKB-UniRule"/>
</dbReference>
<dbReference type="CDD" id="cd07957">
    <property type="entry name" value="Anticodon_Ia_Met"/>
    <property type="match status" value="1"/>
</dbReference>
<dbReference type="CDD" id="cd00814">
    <property type="entry name" value="MetRS_core"/>
    <property type="match status" value="1"/>
</dbReference>
<dbReference type="CDD" id="cd02800">
    <property type="entry name" value="tRNA_bind_EcMetRS_like"/>
    <property type="match status" value="1"/>
</dbReference>
<dbReference type="FunFam" id="1.10.730.10:FF:000005">
    <property type="entry name" value="Methionine--tRNA ligase"/>
    <property type="match status" value="1"/>
</dbReference>
<dbReference type="FunFam" id="2.20.28.20:FF:000001">
    <property type="entry name" value="Methionine--tRNA ligase"/>
    <property type="match status" value="1"/>
</dbReference>
<dbReference type="FunFam" id="2.40.50.140:FF:000042">
    <property type="entry name" value="Methionine--tRNA ligase"/>
    <property type="match status" value="1"/>
</dbReference>
<dbReference type="Gene3D" id="3.40.50.620">
    <property type="entry name" value="HUPs"/>
    <property type="match status" value="1"/>
</dbReference>
<dbReference type="Gene3D" id="1.10.730.10">
    <property type="entry name" value="Isoleucyl-tRNA Synthetase, Domain 1"/>
    <property type="match status" value="1"/>
</dbReference>
<dbReference type="Gene3D" id="2.20.28.20">
    <property type="entry name" value="Methionyl-tRNA synthetase, Zn-domain"/>
    <property type="match status" value="1"/>
</dbReference>
<dbReference type="Gene3D" id="2.40.50.140">
    <property type="entry name" value="Nucleic acid-binding proteins"/>
    <property type="match status" value="1"/>
</dbReference>
<dbReference type="HAMAP" id="MF_00098">
    <property type="entry name" value="Met_tRNA_synth_type1"/>
    <property type="match status" value="1"/>
</dbReference>
<dbReference type="InterPro" id="IPR001412">
    <property type="entry name" value="aa-tRNA-synth_I_CS"/>
</dbReference>
<dbReference type="InterPro" id="IPR041872">
    <property type="entry name" value="Anticodon_Met"/>
</dbReference>
<dbReference type="InterPro" id="IPR004495">
    <property type="entry name" value="Met-tRNA-synth_bsu_C"/>
</dbReference>
<dbReference type="InterPro" id="IPR023458">
    <property type="entry name" value="Met-tRNA_ligase_1"/>
</dbReference>
<dbReference type="InterPro" id="IPR014758">
    <property type="entry name" value="Met-tRNA_synth"/>
</dbReference>
<dbReference type="InterPro" id="IPR015413">
    <property type="entry name" value="Methionyl/Leucyl_tRNA_Synth"/>
</dbReference>
<dbReference type="InterPro" id="IPR033911">
    <property type="entry name" value="MetRS_core"/>
</dbReference>
<dbReference type="InterPro" id="IPR029038">
    <property type="entry name" value="MetRS_Zn"/>
</dbReference>
<dbReference type="InterPro" id="IPR012340">
    <property type="entry name" value="NA-bd_OB-fold"/>
</dbReference>
<dbReference type="InterPro" id="IPR014729">
    <property type="entry name" value="Rossmann-like_a/b/a_fold"/>
</dbReference>
<dbReference type="InterPro" id="IPR002547">
    <property type="entry name" value="tRNA-bd_dom"/>
</dbReference>
<dbReference type="InterPro" id="IPR009080">
    <property type="entry name" value="tRNAsynth_Ia_anticodon-bd"/>
</dbReference>
<dbReference type="NCBIfam" id="TIGR00398">
    <property type="entry name" value="metG"/>
    <property type="match status" value="1"/>
</dbReference>
<dbReference type="NCBIfam" id="TIGR00399">
    <property type="entry name" value="metG_C_term"/>
    <property type="match status" value="1"/>
</dbReference>
<dbReference type="NCBIfam" id="NF001100">
    <property type="entry name" value="PRK00133.1"/>
    <property type="match status" value="1"/>
</dbReference>
<dbReference type="PANTHER" id="PTHR45765">
    <property type="entry name" value="METHIONINE--TRNA LIGASE"/>
    <property type="match status" value="1"/>
</dbReference>
<dbReference type="PANTHER" id="PTHR45765:SF1">
    <property type="entry name" value="METHIONINE--TRNA LIGASE, CYTOPLASMIC"/>
    <property type="match status" value="1"/>
</dbReference>
<dbReference type="Pfam" id="PF19303">
    <property type="entry name" value="Anticodon_3"/>
    <property type="match status" value="1"/>
</dbReference>
<dbReference type="Pfam" id="PF09334">
    <property type="entry name" value="tRNA-synt_1g"/>
    <property type="match status" value="1"/>
</dbReference>
<dbReference type="Pfam" id="PF01588">
    <property type="entry name" value="tRNA_bind"/>
    <property type="match status" value="1"/>
</dbReference>
<dbReference type="PRINTS" id="PR01041">
    <property type="entry name" value="TRNASYNTHMET"/>
</dbReference>
<dbReference type="SUPFAM" id="SSF47323">
    <property type="entry name" value="Anticodon-binding domain of a subclass of class I aminoacyl-tRNA synthetases"/>
    <property type="match status" value="1"/>
</dbReference>
<dbReference type="SUPFAM" id="SSF57770">
    <property type="entry name" value="Methionyl-tRNA synthetase (MetRS), Zn-domain"/>
    <property type="match status" value="1"/>
</dbReference>
<dbReference type="SUPFAM" id="SSF50249">
    <property type="entry name" value="Nucleic acid-binding proteins"/>
    <property type="match status" value="1"/>
</dbReference>
<dbReference type="SUPFAM" id="SSF52374">
    <property type="entry name" value="Nucleotidylyl transferase"/>
    <property type="match status" value="1"/>
</dbReference>
<dbReference type="PROSITE" id="PS00178">
    <property type="entry name" value="AA_TRNA_LIGASE_I"/>
    <property type="match status" value="1"/>
</dbReference>
<dbReference type="PROSITE" id="PS50886">
    <property type="entry name" value="TRBD"/>
    <property type="match status" value="1"/>
</dbReference>
<protein>
    <recommendedName>
        <fullName evidence="1">Methionine--tRNA ligase</fullName>
        <ecNumber evidence="1">6.1.1.10</ecNumber>
    </recommendedName>
    <alternativeName>
        <fullName evidence="1">Methionyl-tRNA synthetase</fullName>
        <shortName evidence="1">MetRS</shortName>
    </alternativeName>
</protein>
<keyword id="KW-0030">Aminoacyl-tRNA synthetase</keyword>
<keyword id="KW-0067">ATP-binding</keyword>
<keyword id="KW-0963">Cytoplasm</keyword>
<keyword id="KW-0436">Ligase</keyword>
<keyword id="KW-0479">Metal-binding</keyword>
<keyword id="KW-0547">Nucleotide-binding</keyword>
<keyword id="KW-0648">Protein biosynthesis</keyword>
<keyword id="KW-1185">Reference proteome</keyword>
<keyword id="KW-0694">RNA-binding</keyword>
<keyword id="KW-0820">tRNA-binding</keyword>
<keyword id="KW-0862">Zinc</keyword>
<evidence type="ECO:0000255" key="1">
    <source>
        <dbReference type="HAMAP-Rule" id="MF_00098"/>
    </source>
</evidence>
<name>SYM_PSYIN</name>
<accession>A1SVA5</accession>
<feature type="chain" id="PRO_0000331881" description="Methionine--tRNA ligase">
    <location>
        <begin position="1"/>
        <end position="686"/>
    </location>
</feature>
<feature type="domain" description="tRNA-binding" evidence="1">
    <location>
        <begin position="585"/>
        <end position="686"/>
    </location>
</feature>
<feature type="short sequence motif" description="'HIGH' region">
    <location>
        <begin position="15"/>
        <end position="25"/>
    </location>
</feature>
<feature type="short sequence motif" description="'KMSKS' region">
    <location>
        <begin position="332"/>
        <end position="336"/>
    </location>
</feature>
<feature type="binding site" evidence="1">
    <location>
        <position position="146"/>
    </location>
    <ligand>
        <name>Zn(2+)</name>
        <dbReference type="ChEBI" id="CHEBI:29105"/>
    </ligand>
</feature>
<feature type="binding site" evidence="1">
    <location>
        <position position="149"/>
    </location>
    <ligand>
        <name>Zn(2+)</name>
        <dbReference type="ChEBI" id="CHEBI:29105"/>
    </ligand>
</feature>
<feature type="binding site" evidence="1">
    <location>
        <position position="159"/>
    </location>
    <ligand>
        <name>Zn(2+)</name>
        <dbReference type="ChEBI" id="CHEBI:29105"/>
    </ligand>
</feature>
<feature type="binding site" evidence="1">
    <location>
        <position position="162"/>
    </location>
    <ligand>
        <name>Zn(2+)</name>
        <dbReference type="ChEBI" id="CHEBI:29105"/>
    </ligand>
</feature>
<feature type="binding site" evidence="1">
    <location>
        <position position="335"/>
    </location>
    <ligand>
        <name>ATP</name>
        <dbReference type="ChEBI" id="CHEBI:30616"/>
    </ligand>
</feature>
<comment type="function">
    <text evidence="1">Is required not only for elongation of protein synthesis but also for the initiation of all mRNA translation through initiator tRNA(fMet) aminoacylation.</text>
</comment>
<comment type="catalytic activity">
    <reaction evidence="1">
        <text>tRNA(Met) + L-methionine + ATP = L-methionyl-tRNA(Met) + AMP + diphosphate</text>
        <dbReference type="Rhea" id="RHEA:13481"/>
        <dbReference type="Rhea" id="RHEA-COMP:9667"/>
        <dbReference type="Rhea" id="RHEA-COMP:9698"/>
        <dbReference type="ChEBI" id="CHEBI:30616"/>
        <dbReference type="ChEBI" id="CHEBI:33019"/>
        <dbReference type="ChEBI" id="CHEBI:57844"/>
        <dbReference type="ChEBI" id="CHEBI:78442"/>
        <dbReference type="ChEBI" id="CHEBI:78530"/>
        <dbReference type="ChEBI" id="CHEBI:456215"/>
        <dbReference type="EC" id="6.1.1.10"/>
    </reaction>
</comment>
<comment type="cofactor">
    <cofactor evidence="1">
        <name>Zn(2+)</name>
        <dbReference type="ChEBI" id="CHEBI:29105"/>
    </cofactor>
    <text evidence="1">Binds 1 zinc ion per subunit.</text>
</comment>
<comment type="subunit">
    <text evidence="1">Homodimer.</text>
</comment>
<comment type="subcellular location">
    <subcellularLocation>
        <location evidence="1">Cytoplasm</location>
    </subcellularLocation>
</comment>
<comment type="similarity">
    <text evidence="1">Belongs to the class-I aminoacyl-tRNA synthetase family. MetG type 1 subfamily.</text>
</comment>
<organism>
    <name type="scientific">Psychromonas ingrahamii (strain DSM 17664 / CCUG 51855 / 37)</name>
    <dbReference type="NCBI Taxonomy" id="357804"/>
    <lineage>
        <taxon>Bacteria</taxon>
        <taxon>Pseudomonadati</taxon>
        <taxon>Pseudomonadota</taxon>
        <taxon>Gammaproteobacteria</taxon>
        <taxon>Alteromonadales</taxon>
        <taxon>Psychromonadaceae</taxon>
        <taxon>Psychromonas</taxon>
    </lineage>
</organism>
<gene>
    <name evidence="1" type="primary">metG</name>
    <name type="ordered locus">Ping_1623</name>
</gene>
<sequence>MEIQQRKILVTCALPYANGPIHLGHMLEHVQADIWVRFQRLRGHNIHFICADDAHGTPIMLKAQEMGIKPTDMIADIRASHESDFSGFNISFDNYHSTHSEENQALSSQIYIALRENGYITNRTISQLFDPEKKMFLPDRFVKGTCPDCKADDQYGDNCDACGATYSPTEMINPKSAVSGSTPIMKDTEHFFFDLPQFEDMLKVWTKSGALQTEMANKVGEWFETGLKQWDITRDAPYFGFEIPDAPGKFFYVWLDAPIGYMGSFKNLCDKTEGLNFDDYWKKDSAAELYHFIGKDIVNFHSLFWPAVLEGAGFRKPTAVNVHGYVTVNGAKMSKSKGTFIKASTYLDNLDPECLRYYYAAKLTSRIDDLDLNLEDFTQRVNSDVVNKLVNLASRTAGFITKKYDGQLSNHVSEPQLYQSFIDAGTSIAALFEQRDFARAIREIMALADIANKYIDEKAPWALAKQEGSEVKVQEICSMGINLFRVLMTYLKPIIPKLAARSEDFLAETLDWEIIKKPLAGHRINKFKALFQRIDPKHVEAMVDASKDSLEADKAAKQKQAAAQLDAAKSELDKEPLAPEIDFDTFAKTDLRVALITKAEAVPKANKLLKLTLDLGGETRTVFAGIKSAYTPEELEGRLTVMVANLAPRQMKFGLSEGMVLATGPGGKEIHILNPDDGAKPGQRIM</sequence>
<reference key="1">
    <citation type="journal article" date="2008" name="BMC Genomics">
        <title>Genomics of an extreme psychrophile, Psychromonas ingrahamii.</title>
        <authorList>
            <person name="Riley M."/>
            <person name="Staley J.T."/>
            <person name="Danchin A."/>
            <person name="Wang T.Z."/>
            <person name="Brettin T.S."/>
            <person name="Hauser L.J."/>
            <person name="Land M.L."/>
            <person name="Thompson L.S."/>
        </authorList>
    </citation>
    <scope>NUCLEOTIDE SEQUENCE [LARGE SCALE GENOMIC DNA]</scope>
    <source>
        <strain>DSM 17664 / CCUG 51855 / 37</strain>
    </source>
</reference>